<evidence type="ECO:0000255" key="1">
    <source>
        <dbReference type="HAMAP-Rule" id="MF_00209"/>
    </source>
</evidence>
<accession>Q979E6</accession>
<keyword id="KW-0963">Cytoplasm</keyword>
<keyword id="KW-0378">Hydrolase</keyword>
<keyword id="KW-0460">Magnesium</keyword>
<keyword id="KW-0479">Metal-binding</keyword>
<proteinExistence type="inferred from homology"/>
<feature type="chain" id="PRO_0000137564" description="Inorganic pyrophosphatase">
    <location>
        <begin position="1"/>
        <end position="169"/>
    </location>
</feature>
<feature type="binding site" evidence="1">
    <location>
        <position position="26"/>
    </location>
    <ligand>
        <name>substrate</name>
    </ligand>
</feature>
<feature type="binding site" evidence="1">
    <location>
        <position position="40"/>
    </location>
    <ligand>
        <name>substrate</name>
    </ligand>
</feature>
<feature type="binding site" evidence="1">
    <location>
        <position position="52"/>
    </location>
    <ligand>
        <name>substrate</name>
    </ligand>
</feature>
<feature type="binding site" evidence="1">
    <location>
        <position position="62"/>
    </location>
    <ligand>
        <name>Mg(2+)</name>
        <dbReference type="ChEBI" id="CHEBI:18420"/>
        <label>1</label>
    </ligand>
</feature>
<feature type="binding site" evidence="1">
    <location>
        <position position="67"/>
    </location>
    <ligand>
        <name>Mg(2+)</name>
        <dbReference type="ChEBI" id="CHEBI:18420"/>
        <label>1</label>
    </ligand>
</feature>
<feature type="binding site" evidence="1">
    <location>
        <position position="67"/>
    </location>
    <ligand>
        <name>Mg(2+)</name>
        <dbReference type="ChEBI" id="CHEBI:18420"/>
        <label>2</label>
    </ligand>
</feature>
<feature type="binding site" evidence="1">
    <location>
        <position position="99"/>
    </location>
    <ligand>
        <name>Mg(2+)</name>
        <dbReference type="ChEBI" id="CHEBI:18420"/>
        <label>1</label>
    </ligand>
</feature>
<feature type="binding site" evidence="1">
    <location>
        <position position="138"/>
    </location>
    <ligand>
        <name>substrate</name>
    </ligand>
</feature>
<name>IPYR_THEVO</name>
<protein>
    <recommendedName>
        <fullName evidence="1">Inorganic pyrophosphatase</fullName>
        <ecNumber evidence="1">3.6.1.1</ecNumber>
    </recommendedName>
    <alternativeName>
        <fullName evidence="1">Pyrophosphate phospho-hydrolase</fullName>
        <shortName evidence="1">PPase</shortName>
    </alternativeName>
</protein>
<sequence>MKNKQTEDFPESFYVMIEIPMGSNCKYEYKEELDNIVLDRVLFTAMTYPANYGFALDTRGKDGDPLDVLVFSSVSINPGIIVRCRAIGVAEMNDEEGEDNKILAVPVDKVDPASSIVRNESDIPEYQKDKLKHFFEHYKELEKGKFMKFHGFKGRDEAVKQLAEARLKQ</sequence>
<comment type="function">
    <text evidence="1">Catalyzes the hydrolysis of inorganic pyrophosphate (PPi) forming two phosphate ions.</text>
</comment>
<comment type="catalytic activity">
    <reaction evidence="1">
        <text>diphosphate + H2O = 2 phosphate + H(+)</text>
        <dbReference type="Rhea" id="RHEA:24576"/>
        <dbReference type="ChEBI" id="CHEBI:15377"/>
        <dbReference type="ChEBI" id="CHEBI:15378"/>
        <dbReference type="ChEBI" id="CHEBI:33019"/>
        <dbReference type="ChEBI" id="CHEBI:43474"/>
        <dbReference type="EC" id="3.6.1.1"/>
    </reaction>
</comment>
<comment type="cofactor">
    <cofactor evidence="1">
        <name>Mg(2+)</name>
        <dbReference type="ChEBI" id="CHEBI:18420"/>
    </cofactor>
</comment>
<comment type="subunit">
    <text evidence="1">Homohexamer.</text>
</comment>
<comment type="subcellular location">
    <subcellularLocation>
        <location evidence="1">Cytoplasm</location>
    </subcellularLocation>
</comment>
<comment type="similarity">
    <text evidence="1">Belongs to the PPase family.</text>
</comment>
<organism>
    <name type="scientific">Thermoplasma volcanium (strain ATCC 51530 / DSM 4299 / JCM 9571 / NBRC 15438 / GSS1)</name>
    <dbReference type="NCBI Taxonomy" id="273116"/>
    <lineage>
        <taxon>Archaea</taxon>
        <taxon>Methanobacteriati</taxon>
        <taxon>Thermoplasmatota</taxon>
        <taxon>Thermoplasmata</taxon>
        <taxon>Thermoplasmatales</taxon>
        <taxon>Thermoplasmataceae</taxon>
        <taxon>Thermoplasma</taxon>
    </lineage>
</organism>
<gene>
    <name evidence="1" type="primary">ppa</name>
    <name type="ordered locus">TV1215</name>
    <name type="ORF">TVG1246465</name>
</gene>
<dbReference type="EC" id="3.6.1.1" evidence="1"/>
<dbReference type="EMBL" id="BA000011">
    <property type="protein sequence ID" value="BAB60357.1"/>
    <property type="molecule type" value="Genomic_DNA"/>
</dbReference>
<dbReference type="RefSeq" id="WP_010917447.1">
    <property type="nucleotide sequence ID" value="NC_002689.2"/>
</dbReference>
<dbReference type="SMR" id="Q979E6"/>
<dbReference type="STRING" id="273116.gene:9382018"/>
<dbReference type="PaxDb" id="273116-14325453"/>
<dbReference type="GeneID" id="1441329"/>
<dbReference type="KEGG" id="tvo:TVG1246465"/>
<dbReference type="eggNOG" id="arCOG01711">
    <property type="taxonomic scope" value="Archaea"/>
</dbReference>
<dbReference type="HOGENOM" id="CLU_073198_1_0_2"/>
<dbReference type="OrthoDB" id="134160at2157"/>
<dbReference type="PhylomeDB" id="Q979E6"/>
<dbReference type="Proteomes" id="UP000001017">
    <property type="component" value="Chromosome"/>
</dbReference>
<dbReference type="GO" id="GO:0005737">
    <property type="term" value="C:cytoplasm"/>
    <property type="evidence" value="ECO:0007669"/>
    <property type="project" value="UniProtKB-SubCell"/>
</dbReference>
<dbReference type="GO" id="GO:0004427">
    <property type="term" value="F:inorganic diphosphate phosphatase activity"/>
    <property type="evidence" value="ECO:0007669"/>
    <property type="project" value="UniProtKB-UniRule"/>
</dbReference>
<dbReference type="GO" id="GO:0000287">
    <property type="term" value="F:magnesium ion binding"/>
    <property type="evidence" value="ECO:0007669"/>
    <property type="project" value="UniProtKB-UniRule"/>
</dbReference>
<dbReference type="GO" id="GO:0006796">
    <property type="term" value="P:phosphate-containing compound metabolic process"/>
    <property type="evidence" value="ECO:0007669"/>
    <property type="project" value="InterPro"/>
</dbReference>
<dbReference type="CDD" id="cd00412">
    <property type="entry name" value="pyrophosphatase"/>
    <property type="match status" value="1"/>
</dbReference>
<dbReference type="Gene3D" id="3.90.80.10">
    <property type="entry name" value="Inorganic pyrophosphatase"/>
    <property type="match status" value="1"/>
</dbReference>
<dbReference type="HAMAP" id="MF_00209">
    <property type="entry name" value="Inorganic_PPase"/>
    <property type="match status" value="1"/>
</dbReference>
<dbReference type="InterPro" id="IPR008162">
    <property type="entry name" value="Pyrophosphatase"/>
</dbReference>
<dbReference type="InterPro" id="IPR036649">
    <property type="entry name" value="Pyrophosphatase_sf"/>
</dbReference>
<dbReference type="NCBIfam" id="NF002317">
    <property type="entry name" value="PRK01250.1"/>
    <property type="match status" value="1"/>
</dbReference>
<dbReference type="PANTHER" id="PTHR10286">
    <property type="entry name" value="INORGANIC PYROPHOSPHATASE"/>
    <property type="match status" value="1"/>
</dbReference>
<dbReference type="Pfam" id="PF00719">
    <property type="entry name" value="Pyrophosphatase"/>
    <property type="match status" value="1"/>
</dbReference>
<dbReference type="SUPFAM" id="SSF50324">
    <property type="entry name" value="Inorganic pyrophosphatase"/>
    <property type="match status" value="1"/>
</dbReference>
<dbReference type="PROSITE" id="PS00387">
    <property type="entry name" value="PPASE"/>
    <property type="match status" value="1"/>
</dbReference>
<reference key="1">
    <citation type="journal article" date="2000" name="Proc. Natl. Acad. Sci. U.S.A.">
        <title>Archaeal adaptation to higher temperatures revealed by genomic sequence of Thermoplasma volcanium.</title>
        <authorList>
            <person name="Kawashima T."/>
            <person name="Amano N."/>
            <person name="Koike H."/>
            <person name="Makino S."/>
            <person name="Higuchi S."/>
            <person name="Kawashima-Ohya Y."/>
            <person name="Watanabe K."/>
            <person name="Yamazaki M."/>
            <person name="Kanehori K."/>
            <person name="Kawamoto T."/>
            <person name="Nunoshiba T."/>
            <person name="Yamamoto Y."/>
            <person name="Aramaki H."/>
            <person name="Makino K."/>
            <person name="Suzuki M."/>
        </authorList>
    </citation>
    <scope>NUCLEOTIDE SEQUENCE [LARGE SCALE GENOMIC DNA]</scope>
    <source>
        <strain>ATCC 51530 / DSM 4299 / JCM 9571 / NBRC 15438 / GSS1</strain>
    </source>
</reference>